<dbReference type="EC" id="5.2.1.8"/>
<dbReference type="EMBL" id="AE005673">
    <property type="protein sequence ID" value="AAK23939.1"/>
    <property type="molecule type" value="Genomic_DNA"/>
</dbReference>
<dbReference type="PIR" id="G87492">
    <property type="entry name" value="G87492"/>
</dbReference>
<dbReference type="RefSeq" id="NP_420771.1">
    <property type="nucleotide sequence ID" value="NC_002696.2"/>
</dbReference>
<dbReference type="RefSeq" id="WP_010919830.1">
    <property type="nucleotide sequence ID" value="NC_002696.2"/>
</dbReference>
<dbReference type="SMR" id="P0CAX0"/>
<dbReference type="STRING" id="190650.CC_1964"/>
<dbReference type="EnsemblBacteria" id="AAK23939">
    <property type="protein sequence ID" value="AAK23939"/>
    <property type="gene ID" value="CC_1964"/>
</dbReference>
<dbReference type="KEGG" id="ccr:CC_1964"/>
<dbReference type="PATRIC" id="fig|190650.5.peg.1981"/>
<dbReference type="eggNOG" id="COG0544">
    <property type="taxonomic scope" value="Bacteria"/>
</dbReference>
<dbReference type="HOGENOM" id="CLU_033058_2_2_5"/>
<dbReference type="BioCyc" id="CAULO:CC1964-MONOMER"/>
<dbReference type="Proteomes" id="UP000001816">
    <property type="component" value="Chromosome"/>
</dbReference>
<dbReference type="GO" id="GO:0005737">
    <property type="term" value="C:cytoplasm"/>
    <property type="evidence" value="ECO:0007669"/>
    <property type="project" value="UniProtKB-SubCell"/>
</dbReference>
<dbReference type="GO" id="GO:0003755">
    <property type="term" value="F:peptidyl-prolyl cis-trans isomerase activity"/>
    <property type="evidence" value="ECO:0007669"/>
    <property type="project" value="UniProtKB-UniRule"/>
</dbReference>
<dbReference type="GO" id="GO:0044183">
    <property type="term" value="F:protein folding chaperone"/>
    <property type="evidence" value="ECO:0007669"/>
    <property type="project" value="TreeGrafter"/>
</dbReference>
<dbReference type="GO" id="GO:0043022">
    <property type="term" value="F:ribosome binding"/>
    <property type="evidence" value="ECO:0007669"/>
    <property type="project" value="TreeGrafter"/>
</dbReference>
<dbReference type="GO" id="GO:0051083">
    <property type="term" value="P:'de novo' cotranslational protein folding"/>
    <property type="evidence" value="ECO:0007669"/>
    <property type="project" value="TreeGrafter"/>
</dbReference>
<dbReference type="GO" id="GO:0051301">
    <property type="term" value="P:cell division"/>
    <property type="evidence" value="ECO:0007669"/>
    <property type="project" value="UniProtKB-KW"/>
</dbReference>
<dbReference type="GO" id="GO:0061077">
    <property type="term" value="P:chaperone-mediated protein folding"/>
    <property type="evidence" value="ECO:0007669"/>
    <property type="project" value="TreeGrafter"/>
</dbReference>
<dbReference type="GO" id="GO:0015031">
    <property type="term" value="P:protein transport"/>
    <property type="evidence" value="ECO:0007669"/>
    <property type="project" value="UniProtKB-UniRule"/>
</dbReference>
<dbReference type="GO" id="GO:0043335">
    <property type="term" value="P:protein unfolding"/>
    <property type="evidence" value="ECO:0007669"/>
    <property type="project" value="TreeGrafter"/>
</dbReference>
<dbReference type="FunFam" id="3.10.50.40:FF:000001">
    <property type="entry name" value="Trigger factor"/>
    <property type="match status" value="1"/>
</dbReference>
<dbReference type="Gene3D" id="3.10.50.40">
    <property type="match status" value="1"/>
</dbReference>
<dbReference type="Gene3D" id="3.30.70.1050">
    <property type="entry name" value="Trigger factor ribosome-binding domain"/>
    <property type="match status" value="1"/>
</dbReference>
<dbReference type="Gene3D" id="1.10.3120.10">
    <property type="entry name" value="Trigger factor, C-terminal domain"/>
    <property type="match status" value="1"/>
</dbReference>
<dbReference type="HAMAP" id="MF_00303">
    <property type="entry name" value="Trigger_factor_Tig"/>
    <property type="match status" value="1"/>
</dbReference>
<dbReference type="InterPro" id="IPR046357">
    <property type="entry name" value="PPIase_dom_sf"/>
</dbReference>
<dbReference type="InterPro" id="IPR001179">
    <property type="entry name" value="PPIase_FKBP_dom"/>
</dbReference>
<dbReference type="InterPro" id="IPR005215">
    <property type="entry name" value="Trig_fac"/>
</dbReference>
<dbReference type="InterPro" id="IPR008880">
    <property type="entry name" value="Trigger_fac_C"/>
</dbReference>
<dbReference type="InterPro" id="IPR037041">
    <property type="entry name" value="Trigger_fac_C_sf"/>
</dbReference>
<dbReference type="InterPro" id="IPR008881">
    <property type="entry name" value="Trigger_fac_ribosome-bd_bac"/>
</dbReference>
<dbReference type="InterPro" id="IPR036611">
    <property type="entry name" value="Trigger_fac_ribosome-bd_sf"/>
</dbReference>
<dbReference type="InterPro" id="IPR027304">
    <property type="entry name" value="Trigger_fact/SurA_dom_sf"/>
</dbReference>
<dbReference type="NCBIfam" id="TIGR00115">
    <property type="entry name" value="tig"/>
    <property type="match status" value="1"/>
</dbReference>
<dbReference type="PANTHER" id="PTHR30560">
    <property type="entry name" value="TRIGGER FACTOR CHAPERONE AND PEPTIDYL-PROLYL CIS/TRANS ISOMERASE"/>
    <property type="match status" value="1"/>
</dbReference>
<dbReference type="PANTHER" id="PTHR30560:SF3">
    <property type="entry name" value="TRIGGER FACTOR-LIKE PROTEIN TIG, CHLOROPLASTIC"/>
    <property type="match status" value="1"/>
</dbReference>
<dbReference type="Pfam" id="PF00254">
    <property type="entry name" value="FKBP_C"/>
    <property type="match status" value="1"/>
</dbReference>
<dbReference type="Pfam" id="PF05698">
    <property type="entry name" value="Trigger_C"/>
    <property type="match status" value="1"/>
</dbReference>
<dbReference type="Pfam" id="PF05697">
    <property type="entry name" value="Trigger_N"/>
    <property type="match status" value="1"/>
</dbReference>
<dbReference type="PIRSF" id="PIRSF003095">
    <property type="entry name" value="Trigger_factor"/>
    <property type="match status" value="1"/>
</dbReference>
<dbReference type="SUPFAM" id="SSF54534">
    <property type="entry name" value="FKBP-like"/>
    <property type="match status" value="1"/>
</dbReference>
<dbReference type="SUPFAM" id="SSF109998">
    <property type="entry name" value="Triger factor/SurA peptide-binding domain-like"/>
    <property type="match status" value="1"/>
</dbReference>
<dbReference type="SUPFAM" id="SSF102735">
    <property type="entry name" value="Trigger factor ribosome-binding domain"/>
    <property type="match status" value="1"/>
</dbReference>
<dbReference type="PROSITE" id="PS50059">
    <property type="entry name" value="FKBP_PPIASE"/>
    <property type="match status" value="1"/>
</dbReference>
<sequence>MQIVEKSGEGLSRVFGVTVPASELATRLEARIAEVAPQMNVKGFRPGKVPTAHVRRLYGKALMGEVIEQALNETTTKVLEDNKLRPAGQPELNPSSDMDKVIAGGEDLSFDLAVEVMPEFEPIDPTSIELVKPVYKVSDEEVQEALDELAKQARTYEPRTGKSLKAKDGDQLLIDFVGTIDGVEFAGGKAEGAELVLGSGQFIPGFEDQLVGAKPGDDVVVKVKFPEEYQAKDLAGKDAEFATKVQEVRAPVDGKADDELAKRLGLSDLAALTELLKSNLAGRYDNSSRFKLKRALLDVLDTKHDFPLPPRMVDAEFAGIWQQVEADKARGGLPPEDAEKTEDQLKDEYKKIAERRVRLGLVLAEIGRKNDVVVTDQELTDAIMREARQYGAQAQQVFDMYRQRADLQAALRAPIYEDKVVDLIFGKAKIEEKEVSKDELLEEDDLPEGYGG</sequence>
<reference key="1">
    <citation type="journal article" date="2001" name="Proc. Natl. Acad. Sci. U.S.A.">
        <title>Complete genome sequence of Caulobacter crescentus.</title>
        <authorList>
            <person name="Nierman W.C."/>
            <person name="Feldblyum T.V."/>
            <person name="Laub M.T."/>
            <person name="Paulsen I.T."/>
            <person name="Nelson K.E."/>
            <person name="Eisen J.A."/>
            <person name="Heidelberg J.F."/>
            <person name="Alley M.R.K."/>
            <person name="Ohta N."/>
            <person name="Maddock J.R."/>
            <person name="Potocka I."/>
            <person name="Nelson W.C."/>
            <person name="Newton A."/>
            <person name="Stephens C."/>
            <person name="Phadke N.D."/>
            <person name="Ely B."/>
            <person name="DeBoy R.T."/>
            <person name="Dodson R.J."/>
            <person name="Durkin A.S."/>
            <person name="Gwinn M.L."/>
            <person name="Haft D.H."/>
            <person name="Kolonay J.F."/>
            <person name="Smit J."/>
            <person name="Craven M.B."/>
            <person name="Khouri H.M."/>
            <person name="Shetty J."/>
            <person name="Berry K.J."/>
            <person name="Utterback T.R."/>
            <person name="Tran K."/>
            <person name="Wolf A.M."/>
            <person name="Vamathevan J.J."/>
            <person name="Ermolaeva M.D."/>
            <person name="White O."/>
            <person name="Salzberg S.L."/>
            <person name="Venter J.C."/>
            <person name="Shapiro L."/>
            <person name="Fraser C.M."/>
        </authorList>
    </citation>
    <scope>NUCLEOTIDE SEQUENCE [LARGE SCALE GENOMIC DNA]</scope>
    <source>
        <strain>ATCC 19089 / CIP 103742 / CB 15</strain>
    </source>
</reference>
<keyword id="KW-0131">Cell cycle</keyword>
<keyword id="KW-0132">Cell division</keyword>
<keyword id="KW-0143">Chaperone</keyword>
<keyword id="KW-0963">Cytoplasm</keyword>
<keyword id="KW-0413">Isomerase</keyword>
<keyword id="KW-1185">Reference proteome</keyword>
<keyword id="KW-0697">Rotamase</keyword>
<accession>P0CAX0</accession>
<accession>O87705</accession>
<comment type="function">
    <text evidence="1">Involved in protein export. Acts as a chaperone by maintaining the newly synthesized protein in an open conformation. Functions as a peptidyl-prolyl cis-trans isomerase (By similarity).</text>
</comment>
<comment type="catalytic activity">
    <reaction>
        <text>[protein]-peptidylproline (omega=180) = [protein]-peptidylproline (omega=0)</text>
        <dbReference type="Rhea" id="RHEA:16237"/>
        <dbReference type="Rhea" id="RHEA-COMP:10747"/>
        <dbReference type="Rhea" id="RHEA-COMP:10748"/>
        <dbReference type="ChEBI" id="CHEBI:83833"/>
        <dbReference type="ChEBI" id="CHEBI:83834"/>
        <dbReference type="EC" id="5.2.1.8"/>
    </reaction>
</comment>
<comment type="subcellular location">
    <subcellularLocation>
        <location>Cytoplasm</location>
    </subcellularLocation>
    <text evidence="1">About half TF is bound to the ribosome near the polypeptide exit tunnel while the other half is free in the cytoplasm.</text>
</comment>
<comment type="domain">
    <text evidence="1">Consists of 3 domains; the N-terminus binds the ribosome, the middle domain has PPIase activity, while the C-terminus has intrinsic chaperone activity on its own.</text>
</comment>
<comment type="similarity">
    <text evidence="2">Belongs to the FKBP-type PPIase family. Tig subfamily.</text>
</comment>
<protein>
    <recommendedName>
        <fullName>Trigger factor</fullName>
        <shortName>TF</shortName>
        <ecNumber>5.2.1.8</ecNumber>
    </recommendedName>
    <alternativeName>
        <fullName>PPIase</fullName>
    </alternativeName>
</protein>
<name>TIG_CAUVC</name>
<gene>
    <name type="primary">tig</name>
    <name type="ordered locus">CC_1964</name>
</gene>
<proteinExistence type="inferred from homology"/>
<organism>
    <name type="scientific">Caulobacter vibrioides (strain ATCC 19089 / CIP 103742 / CB 15)</name>
    <name type="common">Caulobacter crescentus</name>
    <dbReference type="NCBI Taxonomy" id="190650"/>
    <lineage>
        <taxon>Bacteria</taxon>
        <taxon>Pseudomonadati</taxon>
        <taxon>Pseudomonadota</taxon>
        <taxon>Alphaproteobacteria</taxon>
        <taxon>Caulobacterales</taxon>
        <taxon>Caulobacteraceae</taxon>
        <taxon>Caulobacter</taxon>
    </lineage>
</organism>
<evidence type="ECO:0000250" key="1"/>
<evidence type="ECO:0000305" key="2"/>
<feature type="chain" id="PRO_0000179331" description="Trigger factor">
    <location>
        <begin position="1"/>
        <end position="452"/>
    </location>
</feature>
<feature type="domain" description="PPIase FKBP-type">
    <location>
        <begin position="169"/>
        <end position="254"/>
    </location>
</feature>